<evidence type="ECO:0000250" key="1">
    <source>
        <dbReference type="UniProtKB" id="Q53GT1"/>
    </source>
</evidence>
<evidence type="ECO:0000255" key="2">
    <source>
        <dbReference type="PROSITE-ProRule" id="PRU00037"/>
    </source>
</evidence>
<evidence type="ECO:0000256" key="3">
    <source>
        <dbReference type="SAM" id="MobiDB-lite"/>
    </source>
</evidence>
<evidence type="ECO:0000305" key="4"/>
<keyword id="KW-0131">Cell cycle</keyword>
<keyword id="KW-0132">Cell division</keyword>
<keyword id="KW-0963">Cytoplasm</keyword>
<keyword id="KW-0206">Cytoskeleton</keyword>
<keyword id="KW-0880">Kelch repeat</keyword>
<keyword id="KW-0458">Lysosome</keyword>
<keyword id="KW-0498">Mitosis</keyword>
<keyword id="KW-0539">Nucleus</keyword>
<keyword id="KW-1185">Reference proteome</keyword>
<keyword id="KW-0677">Repeat</keyword>
<keyword id="KW-0833">Ubl conjugation pathway</keyword>
<gene>
    <name type="primary">klhl22</name>
</gene>
<reference key="1">
    <citation type="submission" date="2006-09" db="EMBL/GenBank/DDBJ databases">
        <authorList>
            <consortium name="NIH - Xenopus Gene Collection (XGC) project"/>
        </authorList>
    </citation>
    <scope>NUCLEOTIDE SEQUENCE [LARGE SCALE MRNA]</scope>
    <source>
        <strain>N6</strain>
        <tissue>Oviduct</tissue>
    </source>
</reference>
<feature type="chain" id="PRO_0000396636" description="Kelch-like protein 22">
    <location>
        <begin position="1"/>
        <end position="641"/>
    </location>
</feature>
<feature type="domain" description="BTB" evidence="2">
    <location>
        <begin position="50"/>
        <end position="117"/>
    </location>
</feature>
<feature type="repeat" description="Kelch 1">
    <location>
        <begin position="299"/>
        <end position="349"/>
    </location>
</feature>
<feature type="repeat" description="Kelch 2">
    <location>
        <begin position="350"/>
        <end position="399"/>
    </location>
</feature>
<feature type="repeat" description="Kelch 3">
    <location>
        <begin position="400"/>
        <end position="446"/>
    </location>
</feature>
<feature type="repeat" description="Kelch 4">
    <location>
        <begin position="448"/>
        <end position="493"/>
    </location>
</feature>
<feature type="repeat" description="Kelch 5">
    <location>
        <begin position="494"/>
        <end position="544"/>
    </location>
</feature>
<feature type="repeat" description="Kelch 6">
    <location>
        <begin position="545"/>
        <end position="593"/>
    </location>
</feature>
<feature type="region of interest" description="Disordered" evidence="3">
    <location>
        <begin position="1"/>
        <end position="25"/>
    </location>
</feature>
<feature type="compositionally biased region" description="Low complexity" evidence="3">
    <location>
        <begin position="10"/>
        <end position="24"/>
    </location>
</feature>
<name>KLH22_XENTR</name>
<proteinExistence type="evidence at transcript level"/>
<sequence>MAEDLETMKPSQAPQQPSLPQGSSKTYRSAEHSQALLSGLVALRDSGILFDVVLKVEGKSIEAHRILLAASCDYFRGMFAGGLKEMDQREVQIHGVSYSAMCRIMDFIYTSDLALSVNNVQETLTAACQLQISEVIQFCCDFLVSWVDEENVLELYKLADIFHLNRLTEQLDTFVLKNFITFSQTQMYRQLPLDKVFSLLNSNRLEVASENEVYEGALLYHYTPEQLEKDQVSLLESPKLLEAVRFPLMDLAILQRLHDKLGLCPLKTTVLKALEYHKNESMQPVMQGPNTQLRSEFHCVVGFGGMYSAPYTVLSDQVKYLNPLLGEWRPLTAPHAPRMSNQGIAVLNNFVYLIGGDNNVRGYRAEARCWRYDPRHSRWFQIQSMQQPRADLSVCVLGDFLYAVAGRDYHDELKEVERYDPFTNTWEYVAPLQKQVHAHAAAALDGRMYVACGRRGNTYLKDTFCYDPERDQWASVALSPVRRAWHGMAALQEKIYLIGGSNDDEGFRQDVLEVACYSPKTDQWTLVSPLPAGHGEPGIAVLAKKIFVLGGRSHNQGDRTDYVHVYEAERDYWEDGPRLEDDISGMAACVLTLPRSVLMDTDVWTQEMYMQYMDPVQNLADNASEVMSVSDWEDLDNSGED</sequence>
<protein>
    <recommendedName>
        <fullName evidence="4">Kelch-like protein 22</fullName>
    </recommendedName>
</protein>
<accession>Q08CY1</accession>
<comment type="function">
    <text evidence="1">Substrate-specific adapter of a BCR (BTB-CUL3-RBX1) E3 ubiquitin ligase complex. The BCR(KLHL22) ubiquitin ligase complex could mediate the monoubiquitination of PLK1 and regulate its activity in spindle assembly checkpoint (SAC) and chromosome segregation. The BCR(KLHL22) ubiquitin ligase complex may also be responsible for the ubiquitin-dependent proteasomal degradation of DEPDC5 and the activation of the TORC1 pathway.</text>
</comment>
<comment type="pathway">
    <text evidence="1">Protein modification; protein ubiquitination.</text>
</comment>
<comment type="subunit">
    <text evidence="1">Component of the BCR(KLHL22) E3 ubiquitin ligase complex, at least composed of cul3, klhl22 and rbx1.</text>
</comment>
<comment type="subcellular location">
    <subcellularLocation>
        <location evidence="1">Cytoplasm</location>
        <location evidence="1">Cytosol</location>
    </subcellularLocation>
    <subcellularLocation>
        <location evidence="1">Cytoplasm</location>
        <location evidence="1">Cytoskeleton</location>
        <location evidence="1">Microtubule organizing center</location>
        <location evidence="1">Centrosome</location>
    </subcellularLocation>
    <subcellularLocation>
        <location evidence="1">Cytoplasm</location>
        <location evidence="1">Cytoskeleton</location>
        <location evidence="1">Spindle</location>
    </subcellularLocation>
    <subcellularLocation>
        <location evidence="1">Nucleus</location>
    </subcellularLocation>
    <subcellularLocation>
        <location evidence="1">Lysosome</location>
    </subcellularLocation>
</comment>
<dbReference type="EMBL" id="BC124036">
    <property type="protein sequence ID" value="AAI24037.1"/>
    <property type="molecule type" value="mRNA"/>
</dbReference>
<dbReference type="RefSeq" id="NP_001072910.1">
    <property type="nucleotide sequence ID" value="NM_001079442.1"/>
</dbReference>
<dbReference type="RefSeq" id="XP_012821760.1">
    <property type="nucleotide sequence ID" value="XM_012966306.3"/>
</dbReference>
<dbReference type="RefSeq" id="XP_012821764.1">
    <property type="nucleotide sequence ID" value="XM_012966310.3"/>
</dbReference>
<dbReference type="RefSeq" id="XP_031758362.1">
    <property type="nucleotide sequence ID" value="XM_031902502.1"/>
</dbReference>
<dbReference type="SMR" id="Q08CY1"/>
<dbReference type="FunCoup" id="Q08CY1">
    <property type="interactions" value="883"/>
</dbReference>
<dbReference type="STRING" id="8364.ENSXETP00000008514"/>
<dbReference type="PaxDb" id="8364-ENSXETP00000009275"/>
<dbReference type="DNASU" id="780372"/>
<dbReference type="GeneID" id="780372"/>
<dbReference type="KEGG" id="xtr:780372"/>
<dbReference type="AGR" id="Xenbase:XB-GENE-948974"/>
<dbReference type="CTD" id="84861"/>
<dbReference type="Xenbase" id="XB-GENE-948974">
    <property type="gene designation" value="klhl22"/>
</dbReference>
<dbReference type="eggNOG" id="KOG4441">
    <property type="taxonomic scope" value="Eukaryota"/>
</dbReference>
<dbReference type="HOGENOM" id="CLU_004253_14_3_1"/>
<dbReference type="InParanoid" id="Q08CY1"/>
<dbReference type="OrthoDB" id="45365at2759"/>
<dbReference type="Reactome" id="R-XTR-8951664">
    <property type="pathway name" value="Neddylation"/>
</dbReference>
<dbReference type="Reactome" id="R-XTR-983168">
    <property type="pathway name" value="Antigen processing: Ubiquitination &amp; Proteasome degradation"/>
</dbReference>
<dbReference type="UniPathway" id="UPA00143"/>
<dbReference type="Proteomes" id="UP000008143">
    <property type="component" value="Chromosome 1"/>
</dbReference>
<dbReference type="GO" id="GO:0005813">
    <property type="term" value="C:centrosome"/>
    <property type="evidence" value="ECO:0000250"/>
    <property type="project" value="UniProtKB"/>
</dbReference>
<dbReference type="GO" id="GO:0031463">
    <property type="term" value="C:Cul3-RING ubiquitin ligase complex"/>
    <property type="evidence" value="ECO:0000250"/>
    <property type="project" value="UniProtKB"/>
</dbReference>
<dbReference type="GO" id="GO:0005737">
    <property type="term" value="C:cytoplasm"/>
    <property type="evidence" value="ECO:0000250"/>
    <property type="project" value="UniProtKB"/>
</dbReference>
<dbReference type="GO" id="GO:0005829">
    <property type="term" value="C:cytosol"/>
    <property type="evidence" value="ECO:0007669"/>
    <property type="project" value="UniProtKB-SubCell"/>
</dbReference>
<dbReference type="GO" id="GO:0005764">
    <property type="term" value="C:lysosome"/>
    <property type="evidence" value="ECO:0007669"/>
    <property type="project" value="UniProtKB-SubCell"/>
</dbReference>
<dbReference type="GO" id="GO:0072686">
    <property type="term" value="C:mitotic spindle"/>
    <property type="evidence" value="ECO:0000250"/>
    <property type="project" value="UniProtKB"/>
</dbReference>
<dbReference type="GO" id="GO:0005634">
    <property type="term" value="C:nucleus"/>
    <property type="evidence" value="ECO:0007669"/>
    <property type="project" value="UniProtKB-SubCell"/>
</dbReference>
<dbReference type="GO" id="GO:0005827">
    <property type="term" value="C:polar microtubule"/>
    <property type="evidence" value="ECO:0000250"/>
    <property type="project" value="UniProtKB"/>
</dbReference>
<dbReference type="GO" id="GO:0051301">
    <property type="term" value="P:cell division"/>
    <property type="evidence" value="ECO:0000250"/>
    <property type="project" value="UniProtKB"/>
</dbReference>
<dbReference type="GO" id="GO:0000070">
    <property type="term" value="P:mitotic sister chromatid segregation"/>
    <property type="evidence" value="ECO:0000250"/>
    <property type="project" value="UniProtKB"/>
</dbReference>
<dbReference type="GO" id="GO:0007094">
    <property type="term" value="P:mitotic spindle assembly checkpoint signaling"/>
    <property type="evidence" value="ECO:0000250"/>
    <property type="project" value="UniProtKB"/>
</dbReference>
<dbReference type="GO" id="GO:0006513">
    <property type="term" value="P:protein monoubiquitination"/>
    <property type="evidence" value="ECO:0000250"/>
    <property type="project" value="UniProtKB"/>
</dbReference>
<dbReference type="CDD" id="cd18461">
    <property type="entry name" value="BACK_KLHL22"/>
    <property type="match status" value="1"/>
</dbReference>
<dbReference type="CDD" id="cd18251">
    <property type="entry name" value="BTB_POZ_KLHL22"/>
    <property type="match status" value="1"/>
</dbReference>
<dbReference type="FunFam" id="1.25.40.420:FF:000018">
    <property type="entry name" value="Kelch-like family member 22"/>
    <property type="match status" value="1"/>
</dbReference>
<dbReference type="FunFam" id="2.120.10.80:FF:000040">
    <property type="entry name" value="Kelch-like family member 22"/>
    <property type="match status" value="1"/>
</dbReference>
<dbReference type="FunFam" id="3.30.710.10:FF:000083">
    <property type="entry name" value="Kelch-like family member 22"/>
    <property type="match status" value="1"/>
</dbReference>
<dbReference type="Gene3D" id="1.25.40.420">
    <property type="match status" value="1"/>
</dbReference>
<dbReference type="Gene3D" id="2.120.10.80">
    <property type="entry name" value="Kelch-type beta propeller"/>
    <property type="match status" value="1"/>
</dbReference>
<dbReference type="Gene3D" id="3.30.710.10">
    <property type="entry name" value="Potassium Channel Kv1.1, Chain A"/>
    <property type="match status" value="1"/>
</dbReference>
<dbReference type="InterPro" id="IPR011705">
    <property type="entry name" value="BACK"/>
</dbReference>
<dbReference type="InterPro" id="IPR017096">
    <property type="entry name" value="BTB-kelch_protein"/>
</dbReference>
<dbReference type="InterPro" id="IPR000210">
    <property type="entry name" value="BTB/POZ_dom"/>
</dbReference>
<dbReference type="InterPro" id="IPR015915">
    <property type="entry name" value="Kelch-typ_b-propeller"/>
</dbReference>
<dbReference type="InterPro" id="IPR006652">
    <property type="entry name" value="Kelch_1"/>
</dbReference>
<dbReference type="InterPro" id="IPR030575">
    <property type="entry name" value="KLHL22_BACK"/>
</dbReference>
<dbReference type="InterPro" id="IPR011333">
    <property type="entry name" value="SKP1/BTB/POZ_sf"/>
</dbReference>
<dbReference type="PANTHER" id="PTHR45632:SF5">
    <property type="entry name" value="KELCH-LIKE PROTEIN 22"/>
    <property type="match status" value="1"/>
</dbReference>
<dbReference type="PANTHER" id="PTHR45632">
    <property type="entry name" value="LD33804P"/>
    <property type="match status" value="1"/>
</dbReference>
<dbReference type="Pfam" id="PF07707">
    <property type="entry name" value="BACK"/>
    <property type="match status" value="1"/>
</dbReference>
<dbReference type="Pfam" id="PF00651">
    <property type="entry name" value="BTB"/>
    <property type="match status" value="1"/>
</dbReference>
<dbReference type="Pfam" id="PF24681">
    <property type="entry name" value="Kelch_KLHDC2_KLHL20_DRC7"/>
    <property type="match status" value="1"/>
</dbReference>
<dbReference type="PIRSF" id="PIRSF037037">
    <property type="entry name" value="Kelch-like_protein_gigaxonin"/>
    <property type="match status" value="1"/>
</dbReference>
<dbReference type="SMART" id="SM00875">
    <property type="entry name" value="BACK"/>
    <property type="match status" value="1"/>
</dbReference>
<dbReference type="SMART" id="SM00225">
    <property type="entry name" value="BTB"/>
    <property type="match status" value="1"/>
</dbReference>
<dbReference type="SMART" id="SM00612">
    <property type="entry name" value="Kelch"/>
    <property type="match status" value="6"/>
</dbReference>
<dbReference type="SUPFAM" id="SSF117281">
    <property type="entry name" value="Kelch motif"/>
    <property type="match status" value="1"/>
</dbReference>
<dbReference type="SUPFAM" id="SSF54695">
    <property type="entry name" value="POZ domain"/>
    <property type="match status" value="1"/>
</dbReference>
<dbReference type="PROSITE" id="PS50097">
    <property type="entry name" value="BTB"/>
    <property type="match status" value="1"/>
</dbReference>
<organism>
    <name type="scientific">Xenopus tropicalis</name>
    <name type="common">Western clawed frog</name>
    <name type="synonym">Silurana tropicalis</name>
    <dbReference type="NCBI Taxonomy" id="8364"/>
    <lineage>
        <taxon>Eukaryota</taxon>
        <taxon>Metazoa</taxon>
        <taxon>Chordata</taxon>
        <taxon>Craniata</taxon>
        <taxon>Vertebrata</taxon>
        <taxon>Euteleostomi</taxon>
        <taxon>Amphibia</taxon>
        <taxon>Batrachia</taxon>
        <taxon>Anura</taxon>
        <taxon>Pipoidea</taxon>
        <taxon>Pipidae</taxon>
        <taxon>Xenopodinae</taxon>
        <taxon>Xenopus</taxon>
        <taxon>Silurana</taxon>
    </lineage>
</organism>